<keyword id="KW-0333">Golgi apparatus</keyword>
<keyword id="KW-0342">GTP-binding</keyword>
<keyword id="KW-0378">Hydrolase</keyword>
<keyword id="KW-0449">Lipoprotein</keyword>
<keyword id="KW-0460">Magnesium</keyword>
<keyword id="KW-0472">Membrane</keyword>
<keyword id="KW-0479">Metal-binding</keyword>
<keyword id="KW-0547">Nucleotide-binding</keyword>
<keyword id="KW-0636">Prenylation</keyword>
<keyword id="KW-0653">Protein transport</keyword>
<keyword id="KW-1185">Reference proteome</keyword>
<keyword id="KW-0813">Transport</keyword>
<accession>Q8CAM5</accession>
<proteinExistence type="evidence at protein level"/>
<evidence type="ECO:0000250" key="1">
    <source>
        <dbReference type="UniProtKB" id="O95755"/>
    </source>
</evidence>
<evidence type="ECO:0000250" key="2">
    <source>
        <dbReference type="UniProtKB" id="P20340"/>
    </source>
</evidence>
<evidence type="ECO:0000255" key="3"/>
<evidence type="ECO:0000305" key="4"/>
<evidence type="ECO:0000312" key="5">
    <source>
        <dbReference type="MGI" id="MGI:1924127"/>
    </source>
</evidence>
<sequence length="267" mass="29776">MRSSWTPLGPPVSQDRIITSFPKWYTPDACLQLKEHFHSRVSTACQHRNTGTAGLRLSKVVVVGDLYVGKTSLIHRLCKNVFDHDYKATIGVDFEIERFEIAGIPYSLQIWDTAGQEKFKCIASAYYRGAQVIITAFDLTDVQTLEHTRQWLEDVLRENEAGSCFIFLVGTKKDLLSGAACEQAEAEAVHLANEMQAEYWSVSAKTGENVKAFFSRVAALAFEQSVLQDLEKRPSTQSQVGDGDGDLIRIEVPKTQENKRPPGLGCC</sequence>
<organism>
    <name type="scientific">Mus musculus</name>
    <name type="common">Mouse</name>
    <dbReference type="NCBI Taxonomy" id="10090"/>
    <lineage>
        <taxon>Eukaryota</taxon>
        <taxon>Metazoa</taxon>
        <taxon>Chordata</taxon>
        <taxon>Craniata</taxon>
        <taxon>Vertebrata</taxon>
        <taxon>Euteleostomi</taxon>
        <taxon>Mammalia</taxon>
        <taxon>Eutheria</taxon>
        <taxon>Euarchontoglires</taxon>
        <taxon>Glires</taxon>
        <taxon>Rodentia</taxon>
        <taxon>Myomorpha</taxon>
        <taxon>Muroidea</taxon>
        <taxon>Muridae</taxon>
        <taxon>Murinae</taxon>
        <taxon>Mus</taxon>
        <taxon>Mus</taxon>
    </lineage>
</organism>
<comment type="function">
    <text evidence="2">The small GTPases Rab are key regulators of intracellular membrane trafficking, from the formation of transport vesicles to their fusion with membranes. Rabs cycle between an inactive GDP-bound form and an active GTP-bound form that is able to recruit to membranes different sets of downstream effectors directly responsible for vesicle formation, movement, tethering and fusion.</text>
</comment>
<comment type="catalytic activity">
    <reaction evidence="2">
        <text>GTP + H2O = GDP + phosphate + H(+)</text>
        <dbReference type="Rhea" id="RHEA:19669"/>
        <dbReference type="ChEBI" id="CHEBI:15377"/>
        <dbReference type="ChEBI" id="CHEBI:15378"/>
        <dbReference type="ChEBI" id="CHEBI:37565"/>
        <dbReference type="ChEBI" id="CHEBI:43474"/>
        <dbReference type="ChEBI" id="CHEBI:58189"/>
        <dbReference type="EC" id="3.6.5.2"/>
    </reaction>
    <physiologicalReaction direction="left-to-right" evidence="2">
        <dbReference type="Rhea" id="RHEA:19670"/>
    </physiologicalReaction>
</comment>
<comment type="cofactor">
    <cofactor evidence="2">
        <name>Mg(2+)</name>
        <dbReference type="ChEBI" id="CHEBI:18420"/>
    </cofactor>
</comment>
<comment type="activity regulation">
    <text evidence="1">Regulated by guanine nucleotide exchange factors (GEFs) which promote the exchange of bound GDP for free GTP. Regulated by GTPase activating proteins (GAPs) which increase the GTP hydrolysis activity. Inhibited by GDP dissociation inhibitors (GDIs).</text>
</comment>
<comment type="subcellular location">
    <subcellularLocation>
        <location>Golgi apparatus membrane</location>
        <topology>Lipid-anchor</topology>
    </subcellularLocation>
</comment>
<comment type="domain">
    <text evidence="2">Switch 1, switch 2 and the interswitch regions are characteristic of Rab GTPases and mediate the interactions with Rab downstream effectors. The switch regions undergo conformational changes upon nucleotide binding which drives interaction with specific sets of effector proteins, with most effectors only binding to GTP-bound Rab.</text>
</comment>
<comment type="similarity">
    <text evidence="4">Belongs to the small GTPase superfamily. Rab family.</text>
</comment>
<name>RAB36_MOUSE</name>
<dbReference type="EC" id="3.6.5.2" evidence="2"/>
<dbReference type="EMBL" id="AB232632">
    <property type="protein sequence ID" value="BAF02894.1"/>
    <property type="molecule type" value="mRNA"/>
</dbReference>
<dbReference type="EMBL" id="AK038445">
    <property type="protein sequence ID" value="BAC30001.1"/>
    <property type="molecule type" value="mRNA"/>
</dbReference>
<dbReference type="EMBL" id="AK046113">
    <property type="protein sequence ID" value="BAE20653.1"/>
    <property type="molecule type" value="mRNA"/>
</dbReference>
<dbReference type="EMBL" id="AK142025">
    <property type="protein sequence ID" value="BAE24917.1"/>
    <property type="molecule type" value="mRNA"/>
</dbReference>
<dbReference type="EMBL" id="BC119094">
    <property type="protein sequence ID" value="AAI19095.1"/>
    <property type="molecule type" value="mRNA"/>
</dbReference>
<dbReference type="EMBL" id="BC119098">
    <property type="protein sequence ID" value="AAI19099.1"/>
    <property type="molecule type" value="mRNA"/>
</dbReference>
<dbReference type="CCDS" id="CCDS23923.2"/>
<dbReference type="RefSeq" id="NP_001346199.1">
    <property type="nucleotide sequence ID" value="NM_001359270.1"/>
</dbReference>
<dbReference type="RefSeq" id="NP_001346200.1">
    <property type="nucleotide sequence ID" value="NM_001359271.1"/>
</dbReference>
<dbReference type="RefSeq" id="NP_001346201.1">
    <property type="nucleotide sequence ID" value="NM_001359272.1"/>
</dbReference>
<dbReference type="RefSeq" id="NP_084057.1">
    <property type="nucleotide sequence ID" value="NM_029781.3"/>
</dbReference>
<dbReference type="RefSeq" id="XP_006514349.1">
    <property type="nucleotide sequence ID" value="XM_006514286.1"/>
</dbReference>
<dbReference type="RefSeq" id="XP_006514350.1">
    <property type="nucleotide sequence ID" value="XM_006514287.1"/>
</dbReference>
<dbReference type="RefSeq" id="XP_006514351.1">
    <property type="nucleotide sequence ID" value="XM_006514288.1"/>
</dbReference>
<dbReference type="RefSeq" id="XP_006514352.1">
    <property type="nucleotide sequence ID" value="XM_006514289.1"/>
</dbReference>
<dbReference type="RefSeq" id="XP_006514353.1">
    <property type="nucleotide sequence ID" value="XM_006514290.1"/>
</dbReference>
<dbReference type="RefSeq" id="XP_006514354.1">
    <property type="nucleotide sequence ID" value="XM_006514291.1"/>
</dbReference>
<dbReference type="RefSeq" id="XP_011241901.1">
    <property type="nucleotide sequence ID" value="XM_011243599.1"/>
</dbReference>
<dbReference type="SMR" id="Q8CAM5"/>
<dbReference type="FunCoup" id="Q8CAM5">
    <property type="interactions" value="257"/>
</dbReference>
<dbReference type="IntAct" id="Q8CAM5">
    <property type="interactions" value="7"/>
</dbReference>
<dbReference type="STRING" id="10090.ENSMUSP00000157124"/>
<dbReference type="iPTMnet" id="Q8CAM5"/>
<dbReference type="PhosphoSitePlus" id="Q8CAM5"/>
<dbReference type="PaxDb" id="10090-ENSMUSP00000119399"/>
<dbReference type="ProteomicsDB" id="253144"/>
<dbReference type="Pumba" id="Q8CAM5"/>
<dbReference type="Antibodypedia" id="23692">
    <property type="antibodies" value="107 antibodies from 22 providers"/>
</dbReference>
<dbReference type="DNASU" id="76877"/>
<dbReference type="Ensembl" id="ENSMUST00000146440.3">
    <property type="protein sequence ID" value="ENSMUSP00000121693.2"/>
    <property type="gene ID" value="ENSMUSG00000020175.16"/>
</dbReference>
<dbReference type="Ensembl" id="ENSMUST00000147802.9">
    <property type="protein sequence ID" value="ENSMUSP00000119399.2"/>
    <property type="gene ID" value="ENSMUSG00000020175.16"/>
</dbReference>
<dbReference type="Ensembl" id="ENSMUST00000234625.2">
    <property type="protein sequence ID" value="ENSMUSP00000157124.2"/>
    <property type="gene ID" value="ENSMUSG00000020175.16"/>
</dbReference>
<dbReference type="GeneID" id="76877"/>
<dbReference type="UCSC" id="uc007fpx.1">
    <property type="organism name" value="mouse"/>
</dbReference>
<dbReference type="AGR" id="MGI:1924127"/>
<dbReference type="CTD" id="9609"/>
<dbReference type="MGI" id="MGI:1924127">
    <property type="gene designation" value="Rab36"/>
</dbReference>
<dbReference type="VEuPathDB" id="HostDB:ENSMUSG00000020175"/>
<dbReference type="eggNOG" id="KOG0094">
    <property type="taxonomic scope" value="Eukaryota"/>
</dbReference>
<dbReference type="GeneTree" id="ENSGT00940000159687"/>
<dbReference type="HOGENOM" id="CLU_041217_22_1_1"/>
<dbReference type="InParanoid" id="Q8CAM5"/>
<dbReference type="OMA" id="FKCIAAA"/>
<dbReference type="OrthoDB" id="413584at2759"/>
<dbReference type="PhylomeDB" id="Q8CAM5"/>
<dbReference type="TreeFam" id="TF326626"/>
<dbReference type="Reactome" id="R-MMU-6811438">
    <property type="pathway name" value="Intra-Golgi traffic"/>
</dbReference>
<dbReference type="Reactome" id="R-MMU-8873719">
    <property type="pathway name" value="RAB geranylgeranylation"/>
</dbReference>
<dbReference type="BioGRID-ORCS" id="76877">
    <property type="hits" value="2 hits in 76 CRISPR screens"/>
</dbReference>
<dbReference type="ChiTaRS" id="Rab36">
    <property type="organism name" value="mouse"/>
</dbReference>
<dbReference type="PRO" id="PR:Q8CAM5"/>
<dbReference type="Proteomes" id="UP000000589">
    <property type="component" value="Chromosome 10"/>
</dbReference>
<dbReference type="RNAct" id="Q8CAM5">
    <property type="molecule type" value="protein"/>
</dbReference>
<dbReference type="Bgee" id="ENSMUSG00000020175">
    <property type="expression patterns" value="Expressed in medial preoptic region and 163 other cell types or tissues"/>
</dbReference>
<dbReference type="ExpressionAtlas" id="Q8CAM5">
    <property type="expression patterns" value="baseline and differential"/>
</dbReference>
<dbReference type="GO" id="GO:0000139">
    <property type="term" value="C:Golgi membrane"/>
    <property type="evidence" value="ECO:0007669"/>
    <property type="project" value="UniProtKB-SubCell"/>
</dbReference>
<dbReference type="GO" id="GO:0005525">
    <property type="term" value="F:GTP binding"/>
    <property type="evidence" value="ECO:0007669"/>
    <property type="project" value="UniProtKB-KW"/>
</dbReference>
<dbReference type="GO" id="GO:0003924">
    <property type="term" value="F:GTPase activity"/>
    <property type="evidence" value="ECO:0007669"/>
    <property type="project" value="InterPro"/>
</dbReference>
<dbReference type="GO" id="GO:0015031">
    <property type="term" value="P:protein transport"/>
    <property type="evidence" value="ECO:0007669"/>
    <property type="project" value="UniProtKB-KW"/>
</dbReference>
<dbReference type="FunFam" id="3.40.50.300:FF:000707">
    <property type="entry name" value="RAB36, member RAS oncogene family"/>
    <property type="match status" value="1"/>
</dbReference>
<dbReference type="Gene3D" id="3.40.50.300">
    <property type="entry name" value="P-loop containing nucleotide triphosphate hydrolases"/>
    <property type="match status" value="1"/>
</dbReference>
<dbReference type="InterPro" id="IPR027417">
    <property type="entry name" value="P-loop_NTPase"/>
</dbReference>
<dbReference type="InterPro" id="IPR050227">
    <property type="entry name" value="Rab"/>
</dbReference>
<dbReference type="InterPro" id="IPR005225">
    <property type="entry name" value="Small_GTP-bd"/>
</dbReference>
<dbReference type="InterPro" id="IPR001806">
    <property type="entry name" value="Small_GTPase"/>
</dbReference>
<dbReference type="NCBIfam" id="TIGR00231">
    <property type="entry name" value="small_GTP"/>
    <property type="match status" value="1"/>
</dbReference>
<dbReference type="PANTHER" id="PTHR47977">
    <property type="entry name" value="RAS-RELATED PROTEIN RAB"/>
    <property type="match status" value="1"/>
</dbReference>
<dbReference type="Pfam" id="PF00071">
    <property type="entry name" value="Ras"/>
    <property type="match status" value="1"/>
</dbReference>
<dbReference type="PRINTS" id="PR00449">
    <property type="entry name" value="RASTRNSFRMNG"/>
</dbReference>
<dbReference type="SMART" id="SM00175">
    <property type="entry name" value="RAB"/>
    <property type="match status" value="1"/>
</dbReference>
<dbReference type="SMART" id="SM00176">
    <property type="entry name" value="RAN"/>
    <property type="match status" value="1"/>
</dbReference>
<dbReference type="SMART" id="SM00173">
    <property type="entry name" value="RAS"/>
    <property type="match status" value="1"/>
</dbReference>
<dbReference type="SMART" id="SM00174">
    <property type="entry name" value="RHO"/>
    <property type="match status" value="1"/>
</dbReference>
<dbReference type="SUPFAM" id="SSF52540">
    <property type="entry name" value="P-loop containing nucleoside triphosphate hydrolases"/>
    <property type="match status" value="1"/>
</dbReference>
<dbReference type="PROSITE" id="PS51419">
    <property type="entry name" value="RAB"/>
    <property type="match status" value="1"/>
</dbReference>
<feature type="chain" id="PRO_0000315237" description="Ras-related protein Rab-36">
    <location>
        <begin position="1"/>
        <end position="267"/>
    </location>
</feature>
<feature type="short sequence motif" description="Switch 1" evidence="2">
    <location>
        <begin position="76"/>
        <end position="94"/>
    </location>
</feature>
<feature type="short sequence motif" description="Switch 2" evidence="2">
    <location>
        <begin position="113"/>
        <end position="132"/>
    </location>
</feature>
<feature type="binding site" evidence="2">
    <location>
        <position position="68"/>
    </location>
    <ligand>
        <name>GTP</name>
        <dbReference type="ChEBI" id="CHEBI:37565"/>
    </ligand>
</feature>
<feature type="binding site" evidence="2">
    <location>
        <position position="69"/>
    </location>
    <ligand>
        <name>GTP</name>
        <dbReference type="ChEBI" id="CHEBI:37565"/>
    </ligand>
</feature>
<feature type="binding site" evidence="2">
    <location>
        <position position="70"/>
    </location>
    <ligand>
        <name>GTP</name>
        <dbReference type="ChEBI" id="CHEBI:37565"/>
    </ligand>
</feature>
<feature type="binding site" evidence="2">
    <location>
        <position position="71"/>
    </location>
    <ligand>
        <name>GTP</name>
        <dbReference type="ChEBI" id="CHEBI:37565"/>
    </ligand>
</feature>
<feature type="binding site" evidence="2">
    <location>
        <position position="71"/>
    </location>
    <ligand>
        <name>Mg(2+)</name>
        <dbReference type="ChEBI" id="CHEBI:18420"/>
    </ligand>
</feature>
<feature type="binding site" evidence="2">
    <location>
        <position position="72"/>
    </location>
    <ligand>
        <name>GTP</name>
        <dbReference type="ChEBI" id="CHEBI:37565"/>
    </ligand>
</feature>
<feature type="binding site" evidence="2">
    <location>
        <position position="83"/>
    </location>
    <ligand>
        <name>GTP</name>
        <dbReference type="ChEBI" id="CHEBI:37565"/>
    </ligand>
</feature>
<feature type="binding site" evidence="2">
    <location>
        <position position="86"/>
    </location>
    <ligand>
        <name>GTP</name>
        <dbReference type="ChEBI" id="CHEBI:37565"/>
    </ligand>
</feature>
<feature type="binding site" evidence="2">
    <location>
        <position position="89"/>
    </location>
    <ligand>
        <name>GTP</name>
        <dbReference type="ChEBI" id="CHEBI:37565"/>
    </ligand>
</feature>
<feature type="binding site" evidence="2">
    <location>
        <position position="89"/>
    </location>
    <ligand>
        <name>Mg(2+)</name>
        <dbReference type="ChEBI" id="CHEBI:18420"/>
    </ligand>
</feature>
<feature type="binding site" evidence="2">
    <location>
        <position position="112"/>
    </location>
    <ligand>
        <name>Mg(2+)</name>
        <dbReference type="ChEBI" id="CHEBI:18420"/>
    </ligand>
</feature>
<feature type="binding site" evidence="2">
    <location>
        <position position="115"/>
    </location>
    <ligand>
        <name>GTP</name>
        <dbReference type="ChEBI" id="CHEBI:37565"/>
    </ligand>
</feature>
<feature type="binding site" evidence="2">
    <location>
        <position position="172"/>
    </location>
    <ligand>
        <name>GTP</name>
        <dbReference type="ChEBI" id="CHEBI:37565"/>
    </ligand>
</feature>
<feature type="binding site" evidence="2">
    <location>
        <position position="174"/>
    </location>
    <ligand>
        <name>GTP</name>
        <dbReference type="ChEBI" id="CHEBI:37565"/>
    </ligand>
</feature>
<feature type="binding site" evidence="2">
    <location>
        <position position="203"/>
    </location>
    <ligand>
        <name>GTP</name>
        <dbReference type="ChEBI" id="CHEBI:37565"/>
    </ligand>
</feature>
<feature type="binding site" evidence="2">
    <location>
        <position position="204"/>
    </location>
    <ligand>
        <name>GTP</name>
        <dbReference type="ChEBI" id="CHEBI:37565"/>
    </ligand>
</feature>
<feature type="binding site" evidence="2">
    <location>
        <position position="205"/>
    </location>
    <ligand>
        <name>GTP</name>
        <dbReference type="ChEBI" id="CHEBI:37565"/>
    </ligand>
</feature>
<feature type="lipid moiety-binding region" description="S-geranylgeranyl cysteine" evidence="3">
    <location>
        <position position="266"/>
    </location>
</feature>
<feature type="lipid moiety-binding region" description="S-geranylgeranyl cysteine" evidence="3">
    <location>
        <position position="267"/>
    </location>
</feature>
<reference key="1">
    <citation type="journal article" date="2006" name="Genes Cells">
        <title>Screening for target Rabs of TBC (Tre-2/Bub2/Cdc16) domain-containing proteins based on their Rab-binding activity.</title>
        <authorList>
            <person name="Itoh T."/>
            <person name="Satoh M."/>
            <person name="Kanno E."/>
            <person name="Fukuda M."/>
        </authorList>
    </citation>
    <scope>NUCLEOTIDE SEQUENCE [MRNA]</scope>
    <source>
        <strain>BALB/cJ</strain>
    </source>
</reference>
<reference key="2">
    <citation type="journal article" date="2005" name="Science">
        <title>The transcriptional landscape of the mammalian genome.</title>
        <authorList>
            <person name="Carninci P."/>
            <person name="Kasukawa T."/>
            <person name="Katayama S."/>
            <person name="Gough J."/>
            <person name="Frith M.C."/>
            <person name="Maeda N."/>
            <person name="Oyama R."/>
            <person name="Ravasi T."/>
            <person name="Lenhard B."/>
            <person name="Wells C."/>
            <person name="Kodzius R."/>
            <person name="Shimokawa K."/>
            <person name="Bajic V.B."/>
            <person name="Brenner S.E."/>
            <person name="Batalov S."/>
            <person name="Forrest A.R."/>
            <person name="Zavolan M."/>
            <person name="Davis M.J."/>
            <person name="Wilming L.G."/>
            <person name="Aidinis V."/>
            <person name="Allen J.E."/>
            <person name="Ambesi-Impiombato A."/>
            <person name="Apweiler R."/>
            <person name="Aturaliya R.N."/>
            <person name="Bailey T.L."/>
            <person name="Bansal M."/>
            <person name="Baxter L."/>
            <person name="Beisel K.W."/>
            <person name="Bersano T."/>
            <person name="Bono H."/>
            <person name="Chalk A.M."/>
            <person name="Chiu K.P."/>
            <person name="Choudhary V."/>
            <person name="Christoffels A."/>
            <person name="Clutterbuck D.R."/>
            <person name="Crowe M.L."/>
            <person name="Dalla E."/>
            <person name="Dalrymple B.P."/>
            <person name="de Bono B."/>
            <person name="Della Gatta G."/>
            <person name="di Bernardo D."/>
            <person name="Down T."/>
            <person name="Engstrom P."/>
            <person name="Fagiolini M."/>
            <person name="Faulkner G."/>
            <person name="Fletcher C.F."/>
            <person name="Fukushima T."/>
            <person name="Furuno M."/>
            <person name="Futaki S."/>
            <person name="Gariboldi M."/>
            <person name="Georgii-Hemming P."/>
            <person name="Gingeras T.R."/>
            <person name="Gojobori T."/>
            <person name="Green R.E."/>
            <person name="Gustincich S."/>
            <person name="Harbers M."/>
            <person name="Hayashi Y."/>
            <person name="Hensch T.K."/>
            <person name="Hirokawa N."/>
            <person name="Hill D."/>
            <person name="Huminiecki L."/>
            <person name="Iacono M."/>
            <person name="Ikeo K."/>
            <person name="Iwama A."/>
            <person name="Ishikawa T."/>
            <person name="Jakt M."/>
            <person name="Kanapin A."/>
            <person name="Katoh M."/>
            <person name="Kawasawa Y."/>
            <person name="Kelso J."/>
            <person name="Kitamura H."/>
            <person name="Kitano H."/>
            <person name="Kollias G."/>
            <person name="Krishnan S.P."/>
            <person name="Kruger A."/>
            <person name="Kummerfeld S.K."/>
            <person name="Kurochkin I.V."/>
            <person name="Lareau L.F."/>
            <person name="Lazarevic D."/>
            <person name="Lipovich L."/>
            <person name="Liu J."/>
            <person name="Liuni S."/>
            <person name="McWilliam S."/>
            <person name="Madan Babu M."/>
            <person name="Madera M."/>
            <person name="Marchionni L."/>
            <person name="Matsuda H."/>
            <person name="Matsuzawa S."/>
            <person name="Miki H."/>
            <person name="Mignone F."/>
            <person name="Miyake S."/>
            <person name="Morris K."/>
            <person name="Mottagui-Tabar S."/>
            <person name="Mulder N."/>
            <person name="Nakano N."/>
            <person name="Nakauchi H."/>
            <person name="Ng P."/>
            <person name="Nilsson R."/>
            <person name="Nishiguchi S."/>
            <person name="Nishikawa S."/>
            <person name="Nori F."/>
            <person name="Ohara O."/>
            <person name="Okazaki Y."/>
            <person name="Orlando V."/>
            <person name="Pang K.C."/>
            <person name="Pavan W.J."/>
            <person name="Pavesi G."/>
            <person name="Pesole G."/>
            <person name="Petrovsky N."/>
            <person name="Piazza S."/>
            <person name="Reed J."/>
            <person name="Reid J.F."/>
            <person name="Ring B.Z."/>
            <person name="Ringwald M."/>
            <person name="Rost B."/>
            <person name="Ruan Y."/>
            <person name="Salzberg S.L."/>
            <person name="Sandelin A."/>
            <person name="Schneider C."/>
            <person name="Schoenbach C."/>
            <person name="Sekiguchi K."/>
            <person name="Semple C.A."/>
            <person name="Seno S."/>
            <person name="Sessa L."/>
            <person name="Sheng Y."/>
            <person name="Shibata Y."/>
            <person name="Shimada H."/>
            <person name="Shimada K."/>
            <person name="Silva D."/>
            <person name="Sinclair B."/>
            <person name="Sperling S."/>
            <person name="Stupka E."/>
            <person name="Sugiura K."/>
            <person name="Sultana R."/>
            <person name="Takenaka Y."/>
            <person name="Taki K."/>
            <person name="Tammoja K."/>
            <person name="Tan S.L."/>
            <person name="Tang S."/>
            <person name="Taylor M.S."/>
            <person name="Tegner J."/>
            <person name="Teichmann S.A."/>
            <person name="Ueda H.R."/>
            <person name="van Nimwegen E."/>
            <person name="Verardo R."/>
            <person name="Wei C.L."/>
            <person name="Yagi K."/>
            <person name="Yamanishi H."/>
            <person name="Zabarovsky E."/>
            <person name="Zhu S."/>
            <person name="Zimmer A."/>
            <person name="Hide W."/>
            <person name="Bult C."/>
            <person name="Grimmond S.M."/>
            <person name="Teasdale R.D."/>
            <person name="Liu E.T."/>
            <person name="Brusic V."/>
            <person name="Quackenbush J."/>
            <person name="Wahlestedt C."/>
            <person name="Mattick J.S."/>
            <person name="Hume D.A."/>
            <person name="Kai C."/>
            <person name="Sasaki D."/>
            <person name="Tomaru Y."/>
            <person name="Fukuda S."/>
            <person name="Kanamori-Katayama M."/>
            <person name="Suzuki M."/>
            <person name="Aoki J."/>
            <person name="Arakawa T."/>
            <person name="Iida J."/>
            <person name="Imamura K."/>
            <person name="Itoh M."/>
            <person name="Kato T."/>
            <person name="Kawaji H."/>
            <person name="Kawagashira N."/>
            <person name="Kawashima T."/>
            <person name="Kojima M."/>
            <person name="Kondo S."/>
            <person name="Konno H."/>
            <person name="Nakano K."/>
            <person name="Ninomiya N."/>
            <person name="Nishio T."/>
            <person name="Okada M."/>
            <person name="Plessy C."/>
            <person name="Shibata K."/>
            <person name="Shiraki T."/>
            <person name="Suzuki S."/>
            <person name="Tagami M."/>
            <person name="Waki K."/>
            <person name="Watahiki A."/>
            <person name="Okamura-Oho Y."/>
            <person name="Suzuki H."/>
            <person name="Kawai J."/>
            <person name="Hayashizaki Y."/>
        </authorList>
    </citation>
    <scope>NUCLEOTIDE SEQUENCE [LARGE SCALE MRNA]</scope>
    <source>
        <strain>C57BL/6J</strain>
        <tissue>Corpora quadrigemina</tissue>
        <tissue>Eye</tissue>
        <tissue>Hypothalamus</tissue>
    </source>
</reference>
<reference key="3">
    <citation type="journal article" date="2004" name="Genome Res.">
        <title>The status, quality, and expansion of the NIH full-length cDNA project: the Mammalian Gene Collection (MGC).</title>
        <authorList>
            <consortium name="The MGC Project Team"/>
        </authorList>
    </citation>
    <scope>NUCLEOTIDE SEQUENCE [LARGE SCALE MRNA]</scope>
    <source>
        <tissue>Brain</tissue>
    </source>
</reference>
<reference key="4">
    <citation type="journal article" date="2010" name="Cell">
        <title>A tissue-specific atlas of mouse protein phosphorylation and expression.</title>
        <authorList>
            <person name="Huttlin E.L."/>
            <person name="Jedrychowski M.P."/>
            <person name="Elias J.E."/>
            <person name="Goswami T."/>
            <person name="Rad R."/>
            <person name="Beausoleil S.A."/>
            <person name="Villen J."/>
            <person name="Haas W."/>
            <person name="Sowa M.E."/>
            <person name="Gygi S.P."/>
        </authorList>
    </citation>
    <scope>IDENTIFICATION BY MASS SPECTROMETRY [LARGE SCALE ANALYSIS]</scope>
    <source>
        <tissue>Testis</tissue>
    </source>
</reference>
<gene>
    <name evidence="5" type="primary">Rab36</name>
</gene>
<protein>
    <recommendedName>
        <fullName>Ras-related protein Rab-36</fullName>
        <ecNumber evidence="2">3.6.5.2</ecNumber>
    </recommendedName>
</protein>